<sequence length="1095" mass="120355">MSVSIPSNSVPSSASRFQVHVINEGHGSAAAVGDSADPPHYEETSFGDEAQNRLRISFRPGNQECYDNFLQTGETAKTDTTFHAYDSHTNTYYLQTFGHNTMDAVPKIEYYRNTGSVSGPKVNRPSLLEIHEQLAKNVTVAPGSADRVANGDGMPGDEQAENKEEDMTGVVKFGWVKGVLVRCMLNIWGVMLFIRLSWIVGEAGIGLGVLIILLSTMVTSITGLSTSAIATNGFVRGGGAYYLISRSLGPEFGGSIGLIFAFANAVAVAMYVVGFAETVVDLLKESDSMMVDPTNDIRIIGSITVVILLGISVAGMEWEAKAQVILLVILLIAIANFFIGTVIPSNNEKKSRGFFNYQASIFAENFGPSFTKGEGFFSVFAIFFPAATGILAGANISGDLEDPQDAIPRGTMLAIFITTVAYIGVAICVAACVVRDATGSMNDTIVSGMNCNGSAACGLGYDFSRCQHEPCQYGLMNNFQVMSMVSGFGPLITAGIFSATLSSALASLVSAPKVFQALCKDNIFKGLQFFAKGYGKNNEPLRGYFLTFVIAMAFILIAELNVIAPIISNFFLASYALINFSCFHASYAKSPGWRPAYGIYNMWVSLFGAILCCAVMFVINWWAAVITYVIELFLYIYVTYKKPDVNWGSSTQALSYVSALDNALELTTVEDHVKNFRPQCIVLTGGPMTRPALLDITHAFTKNSGLCICCEVFVGPRKLCVKEMNSGMAKKQAWLIKNKIKAFYAAVAADCFRDGVRSLLQASGLGRMKPNTLVIGYKKNWRKAPLSELENYVGIIHDAFDFEIGVVIVRISQGFDISPVLQVQDELEKLEQERLALEAAIKDNECEEGKGGIRGLFKKAGKLNITKPAPKKDGNISSIQSMHVGEFNQKLVEASAQFKKKQGKGTIDVWWLFDDGGLTLLIPYILTLRKKWKDCKLRIYVGGKITRIEEEKISMASLLSKFRIKFADIHIIGDINIKPNKESWKVFEEMIEPYRLHESHKDLTTAEKLKRESPWKITDAELEAVKEKSYRQVRLNELLQEHSRAANLIVLSLPVARKGSISDLLYMAWLEILTKNLPPVLLVRGNHKNVLTFYS</sequence>
<keyword id="KW-0025">Alternative splicing</keyword>
<keyword id="KW-1003">Cell membrane</keyword>
<keyword id="KW-0868">Chloride</keyword>
<keyword id="KW-0325">Glycoprotein</keyword>
<keyword id="KW-0406">Ion transport</keyword>
<keyword id="KW-0472">Membrane</keyword>
<keyword id="KW-0597">Phosphoprotein</keyword>
<keyword id="KW-0630">Potassium</keyword>
<keyword id="KW-0633">Potassium transport</keyword>
<keyword id="KW-1185">Reference proteome</keyword>
<keyword id="KW-0915">Sodium</keyword>
<keyword id="KW-0739">Sodium transport</keyword>
<keyword id="KW-0769">Symport</keyword>
<keyword id="KW-0812">Transmembrane</keyword>
<keyword id="KW-1133">Transmembrane helix</keyword>
<keyword id="KW-0813">Transport</keyword>
<feature type="chain" id="PRO_0000178019" description="Solute carrier family 12 member 1">
    <location>
        <begin position="1"/>
        <end position="1095"/>
    </location>
</feature>
<feature type="topological domain" description="Cytoplasmic" evidence="16">
    <location>
        <begin position="1"/>
        <end position="173"/>
    </location>
</feature>
<feature type="transmembrane region" description="Helical" evidence="3">
    <location>
        <begin position="174"/>
        <end position="194"/>
    </location>
</feature>
<feature type="topological domain" description="Extracellular" evidence="16">
    <location>
        <begin position="195"/>
        <end position="197"/>
    </location>
</feature>
<feature type="transmembrane region" description="Helical" evidence="3">
    <location>
        <begin position="198"/>
        <end position="218"/>
    </location>
</feature>
<feature type="topological domain" description="Cytoplasmic" evidence="16">
    <location>
        <begin position="219"/>
        <end position="255"/>
    </location>
</feature>
<feature type="transmembrane region" description="Helical" evidence="3">
    <location>
        <begin position="256"/>
        <end position="276"/>
    </location>
</feature>
<feature type="topological domain" description="Extracellular" evidence="16">
    <location>
        <begin position="277"/>
        <end position="298"/>
    </location>
</feature>
<feature type="transmembrane region" description="Helical" evidence="3">
    <location>
        <begin position="299"/>
        <end position="319"/>
    </location>
</feature>
<feature type="topological domain" description="Cytoplasmic" evidence="16">
    <location>
        <begin position="320"/>
        <end position="323"/>
    </location>
</feature>
<feature type="transmembrane region" description="Helical" evidence="3">
    <location>
        <begin position="324"/>
        <end position="344"/>
    </location>
</feature>
<feature type="topological domain" description="Extracellular" evidence="16">
    <location>
        <begin position="345"/>
        <end position="375"/>
    </location>
</feature>
<feature type="transmembrane region" description="Helical" evidence="3">
    <location>
        <begin position="376"/>
        <end position="396"/>
    </location>
</feature>
<feature type="topological domain" description="Cytoplasmic" evidence="16">
    <location>
        <begin position="397"/>
        <end position="413"/>
    </location>
</feature>
<feature type="transmembrane region" description="Helical" evidence="3">
    <location>
        <begin position="414"/>
        <end position="434"/>
    </location>
</feature>
<feature type="topological domain" description="Extracellular" evidence="16">
    <location>
        <begin position="435"/>
        <end position="546"/>
    </location>
</feature>
<feature type="transmembrane region" description="Helical" evidence="3">
    <location>
        <begin position="547"/>
        <end position="567"/>
    </location>
</feature>
<feature type="transmembrane region" description="Helical" evidence="3">
    <location>
        <begin position="568"/>
        <end position="588"/>
    </location>
</feature>
<feature type="topological domain" description="Extracellular" evidence="16">
    <location>
        <begin position="589"/>
        <end position="605"/>
    </location>
</feature>
<feature type="transmembrane region" description="Helical" evidence="3">
    <location>
        <begin position="606"/>
        <end position="626"/>
    </location>
</feature>
<feature type="topological domain" description="Cytoplasmic" evidence="16">
    <location>
        <begin position="627"/>
        <end position="1095"/>
    </location>
</feature>
<feature type="region of interest" description="Disordered" evidence="4">
    <location>
        <begin position="29"/>
        <end position="49"/>
    </location>
</feature>
<feature type="short sequence motif" description="RFXV motif" evidence="2">
    <location>
        <begin position="16"/>
        <end position="19"/>
    </location>
</feature>
<feature type="modified residue" description="Phosphoserine" evidence="19">
    <location>
        <position position="57"/>
    </location>
</feature>
<feature type="modified residue" description="Phosphoserine" evidence="7">
    <location>
        <position position="87"/>
    </location>
</feature>
<feature type="modified residue" description="Phosphothreonine" evidence="2">
    <location>
        <position position="91"/>
    </location>
</feature>
<feature type="modified residue" description="Phosphothreonine" evidence="7 9 19">
    <location>
        <position position="96"/>
    </location>
</feature>
<feature type="modified residue" description="Phosphothreonine" evidence="7 9 19">
    <location>
        <position position="101"/>
    </location>
</feature>
<feature type="modified residue" description="Phosphothreonine" evidence="1">
    <location>
        <position position="114"/>
    </location>
</feature>
<feature type="modified residue" description="Phosphoserine" evidence="1">
    <location>
        <position position="116"/>
    </location>
</feature>
<feature type="modified residue" description="Phosphoserine; by AMPK" evidence="1">
    <location>
        <position position="126"/>
    </location>
</feature>
<feature type="modified residue" description="Phosphoserine" evidence="1">
    <location>
        <position position="144"/>
    </location>
</feature>
<feature type="glycosylation site" description="N-linked (GlcNAc...) asparagine" evidence="3">
    <location>
        <position position="442"/>
    </location>
</feature>
<feature type="glycosylation site" description="N-linked (GlcNAc...) asparagine" evidence="3">
    <location>
        <position position="452"/>
    </location>
</feature>
<feature type="splice variant" id="VSP_006099" description="In isoform B." evidence="15">
    <original>LIILLSTMVTSITGLSTSAIATNGF</original>
    <variation>IIIGLAVTVTAITGLSTSAIATNGY</variation>
    <location>
        <begin position="210"/>
        <end position="234"/>
    </location>
</feature>
<feature type="splice variant" id="VSP_006100" description="In isoform F." evidence="12 15">
    <original>LIILLSTMVTSITGLSTSAIATNGF</original>
    <variation>IIIGLSVVVTTLTGISMSAICTNGV</variation>
    <location>
        <begin position="210"/>
        <end position="234"/>
    </location>
</feature>
<feature type="splice variant" id="VSP_006101" description="In isoform A4." evidence="12">
    <location>
        <begin position="715"/>
        <end position="1059"/>
    </location>
</feature>
<feature type="splice variant" id="VSP_006102" description="In isoform A4." evidence="12">
    <original>SISDLLYMAWLEILTKNLPPVLLVRGNHKNVLTFYS</original>
    <variation>VRATSSGSSAFSLCSQWVMLGGTEDTHGNRKEKKRLGQEFTSLKKQTNKQCNRGCK</variation>
    <location>
        <begin position="1060"/>
        <end position="1095"/>
    </location>
</feature>
<feature type="sequence conflict" description="In Ref. 1; AAC52632/AAB03495/AAC52633." evidence="16" ref="1">
    <original>A</original>
    <variation>S</variation>
    <location>
        <position position="30"/>
    </location>
</feature>
<feature type="sequence conflict" description="In Ref. 1; AAC52632/AAB03495/AAC52633." evidence="16" ref="1">
    <original>D</original>
    <variation>G</variation>
    <location>
        <position position="48"/>
    </location>
</feature>
<feature type="sequence conflict" description="In Ref. 1; AAC52632/AAB03495/AAC52633." evidence="16" ref="1">
    <original>I</original>
    <variation>T</variation>
    <location>
        <position position="599"/>
    </location>
</feature>
<feature type="sequence conflict" description="In Ref. 1; AAC52632/AAB03495/AAC52633." evidence="16" ref="1">
    <original>L</original>
    <variation>P</variation>
    <location>
        <position position="773"/>
    </location>
</feature>
<feature type="sequence conflict" description="In Ref. 2; AAB65150." evidence="16" ref="2">
    <original>D</original>
    <variation>G</variation>
    <location>
        <position position="873"/>
    </location>
</feature>
<feature type="sequence conflict" description="In Ref. 2; AAB65150 and 3; AAH16888." evidence="16" ref="2 3">
    <original>T</original>
    <variation>N</variation>
    <location>
        <position position="946"/>
    </location>
</feature>
<protein>
    <recommendedName>
        <fullName>Solute carrier family 12 member 1</fullName>
    </recommendedName>
    <alternativeName>
        <fullName evidence="13">Bumetanide-sensitive sodium-(potassium)-chloride cotransporter 1</fullName>
        <shortName evidence="13">BSC1</shortName>
    </alternativeName>
    <alternativeName>
        <fullName>Kidney-specific Na-K-Cl symporter</fullName>
    </alternativeName>
    <alternativeName>
        <fullName evidence="14">Na-K-2Cl cotransporter 2</fullName>
        <shortName>mNKCC2</shortName>
    </alternativeName>
</protein>
<name>S12A1_MOUSE</name>
<accession>P55014</accession>
<accession>O35938</accession>
<accession>Q91W55</accession>
<accession>Q9Z1E0</accession>
<proteinExistence type="evidence at protein level"/>
<evidence type="ECO:0000250" key="1">
    <source>
        <dbReference type="UniProtKB" id="P55016"/>
    </source>
</evidence>
<evidence type="ECO:0000250" key="2">
    <source>
        <dbReference type="UniProtKB" id="Q13621"/>
    </source>
</evidence>
<evidence type="ECO:0000255" key="3"/>
<evidence type="ECO:0000256" key="4">
    <source>
        <dbReference type="SAM" id="MobiDB-lite"/>
    </source>
</evidence>
<evidence type="ECO:0000269" key="5">
    <source>
    </source>
</evidence>
<evidence type="ECO:0000269" key="6">
    <source>
    </source>
</evidence>
<evidence type="ECO:0000269" key="7">
    <source>
    </source>
</evidence>
<evidence type="ECO:0000269" key="8">
    <source>
    </source>
</evidence>
<evidence type="ECO:0000269" key="9">
    <source>
    </source>
</evidence>
<evidence type="ECO:0000269" key="10">
    <source>
    </source>
</evidence>
<evidence type="ECO:0000269" key="11">
    <source>
    </source>
</evidence>
<evidence type="ECO:0000303" key="12">
    <source>
    </source>
</evidence>
<evidence type="ECO:0000303" key="13">
    <source>
    </source>
</evidence>
<evidence type="ECO:0000303" key="14">
    <source>
    </source>
</evidence>
<evidence type="ECO:0000303" key="15">
    <source>
    </source>
</evidence>
<evidence type="ECO:0000305" key="16"/>
<evidence type="ECO:0000305" key="17">
    <source>
    </source>
</evidence>
<evidence type="ECO:0000305" key="18">
    <source>
    </source>
</evidence>
<evidence type="ECO:0007744" key="19">
    <source>
    </source>
</evidence>
<organism>
    <name type="scientific">Mus musculus</name>
    <name type="common">Mouse</name>
    <dbReference type="NCBI Taxonomy" id="10090"/>
    <lineage>
        <taxon>Eukaryota</taxon>
        <taxon>Metazoa</taxon>
        <taxon>Chordata</taxon>
        <taxon>Craniata</taxon>
        <taxon>Vertebrata</taxon>
        <taxon>Euteleostomi</taxon>
        <taxon>Mammalia</taxon>
        <taxon>Eutheria</taxon>
        <taxon>Euarchontoglires</taxon>
        <taxon>Glires</taxon>
        <taxon>Rodentia</taxon>
        <taxon>Myomorpha</taxon>
        <taxon>Muroidea</taxon>
        <taxon>Muridae</taxon>
        <taxon>Murinae</taxon>
        <taxon>Mus</taxon>
        <taxon>Mus</taxon>
    </lineage>
</organism>
<gene>
    <name type="primary">Slc12a1</name>
    <name type="synonym">Nkcc2</name>
</gene>
<dbReference type="EMBL" id="U20973">
    <property type="protein sequence ID" value="AAC52632.1"/>
    <property type="molecule type" value="mRNA"/>
</dbReference>
<dbReference type="EMBL" id="U20974">
    <property type="protein sequence ID" value="AAB03495.1"/>
    <property type="molecule type" value="mRNA"/>
</dbReference>
<dbReference type="EMBL" id="U20975">
    <property type="protein sequence ID" value="AAC52633.1"/>
    <property type="molecule type" value="mRNA"/>
</dbReference>
<dbReference type="EMBL" id="U94518">
    <property type="protein sequence ID" value="AAB65150.1"/>
    <property type="molecule type" value="mRNA"/>
</dbReference>
<dbReference type="EMBL" id="U61381">
    <property type="protein sequence ID" value="AAD00091.1"/>
    <property type="molecule type" value="mRNA"/>
</dbReference>
<dbReference type="EMBL" id="BC016888">
    <property type="protein sequence ID" value="AAH16888.1"/>
    <property type="molecule type" value="mRNA"/>
</dbReference>
<dbReference type="PIR" id="I49268">
    <property type="entry name" value="I49268"/>
</dbReference>
<dbReference type="PIR" id="I49269">
    <property type="entry name" value="I49269"/>
</dbReference>
<dbReference type="PIR" id="I49270">
    <property type="entry name" value="I49270"/>
</dbReference>
<dbReference type="RefSeq" id="NP_001073158.1">
    <property type="nucleotide sequence ID" value="NM_001079690.1"/>
</dbReference>
<dbReference type="RefSeq" id="NP_899197.2">
    <property type="nucleotide sequence ID" value="NM_183354.2"/>
</dbReference>
<dbReference type="SMR" id="P55014"/>
<dbReference type="BioGRID" id="203276">
    <property type="interactions" value="2"/>
</dbReference>
<dbReference type="ELM" id="P55014"/>
<dbReference type="FunCoup" id="P55014">
    <property type="interactions" value="89"/>
</dbReference>
<dbReference type="IntAct" id="P55014">
    <property type="interactions" value="1"/>
</dbReference>
<dbReference type="STRING" id="10090.ENSMUSP00000028630"/>
<dbReference type="GlyCosmos" id="P55014">
    <property type="glycosylation" value="2 sites, No reported glycans"/>
</dbReference>
<dbReference type="GlyGen" id="P55014">
    <property type="glycosylation" value="2 sites"/>
</dbReference>
<dbReference type="iPTMnet" id="P55014"/>
<dbReference type="PhosphoSitePlus" id="P55014"/>
<dbReference type="jPOST" id="P55014"/>
<dbReference type="PaxDb" id="10090-ENSMUSP00000106120"/>
<dbReference type="PeptideAtlas" id="P55014"/>
<dbReference type="ProteomicsDB" id="253333">
    <molecule id="P55014-1"/>
</dbReference>
<dbReference type="ProteomicsDB" id="253334">
    <molecule id="P55014-2"/>
</dbReference>
<dbReference type="ProteomicsDB" id="253335">
    <molecule id="P55014-3"/>
</dbReference>
<dbReference type="ProteomicsDB" id="253336">
    <molecule id="P55014-4"/>
</dbReference>
<dbReference type="DNASU" id="20495"/>
<dbReference type="GeneID" id="20495"/>
<dbReference type="KEGG" id="mmu:20495"/>
<dbReference type="UCSC" id="uc008mcg.1">
    <molecule id="P55014-1"/>
    <property type="organism name" value="mouse"/>
</dbReference>
<dbReference type="UCSC" id="uc008mch.1">
    <molecule id="P55014-4"/>
    <property type="organism name" value="mouse"/>
</dbReference>
<dbReference type="UCSC" id="uc008mci.1">
    <molecule id="P55014-2"/>
    <property type="organism name" value="mouse"/>
</dbReference>
<dbReference type="AGR" id="MGI:103150"/>
<dbReference type="CTD" id="6557"/>
<dbReference type="MGI" id="MGI:103150">
    <property type="gene designation" value="Slc12a1"/>
</dbReference>
<dbReference type="eggNOG" id="KOG2083">
    <property type="taxonomic scope" value="Eukaryota"/>
</dbReference>
<dbReference type="InParanoid" id="P55014"/>
<dbReference type="PhylomeDB" id="P55014"/>
<dbReference type="Reactome" id="R-MMU-426117">
    <property type="pathway name" value="Cation-coupled Chloride cotransporters"/>
</dbReference>
<dbReference type="BioGRID-ORCS" id="20495">
    <property type="hits" value="1 hit in 77 CRISPR screens"/>
</dbReference>
<dbReference type="ChiTaRS" id="Slc12a1">
    <property type="organism name" value="mouse"/>
</dbReference>
<dbReference type="PRO" id="PR:P55014"/>
<dbReference type="Proteomes" id="UP000000589">
    <property type="component" value="Unplaced"/>
</dbReference>
<dbReference type="RNAct" id="P55014">
    <property type="molecule type" value="protein"/>
</dbReference>
<dbReference type="GO" id="GO:0016324">
    <property type="term" value="C:apical plasma membrane"/>
    <property type="evidence" value="ECO:0000314"/>
    <property type="project" value="UniProtKB"/>
</dbReference>
<dbReference type="GO" id="GO:0008511">
    <property type="term" value="F:sodium:potassium:chloride symporter activity"/>
    <property type="evidence" value="ECO:0000314"/>
    <property type="project" value="UniProtKB"/>
</dbReference>
<dbReference type="GO" id="GO:0071475">
    <property type="term" value="P:cellular hyperosmotic salinity response"/>
    <property type="evidence" value="ECO:0000315"/>
    <property type="project" value="MGI"/>
</dbReference>
<dbReference type="GO" id="GO:0001822">
    <property type="term" value="P:kidney development"/>
    <property type="evidence" value="ECO:0000315"/>
    <property type="project" value="MGI"/>
</dbReference>
<dbReference type="GO" id="GO:0070886">
    <property type="term" value="P:positive regulation of calcineurin-NFAT signaling cascade"/>
    <property type="evidence" value="ECO:0000315"/>
    <property type="project" value="MGI"/>
</dbReference>
<dbReference type="GO" id="GO:0071918">
    <property type="term" value="P:urea transmembrane transport"/>
    <property type="evidence" value="ECO:0000315"/>
    <property type="project" value="MGI"/>
</dbReference>
<dbReference type="FunFam" id="1.20.1740.10:FF:000005">
    <property type="entry name" value="Solute carrier family 12 member 1"/>
    <property type="match status" value="1"/>
</dbReference>
<dbReference type="Gene3D" id="1.20.1740.10">
    <property type="entry name" value="Amino acid/polyamine transporter I"/>
    <property type="match status" value="1"/>
</dbReference>
<dbReference type="InterPro" id="IPR004841">
    <property type="entry name" value="AA-permease/SLC12A_dom"/>
</dbReference>
<dbReference type="InterPro" id="IPR013612">
    <property type="entry name" value="AA_permease_N"/>
</dbReference>
<dbReference type="InterPro" id="IPR018491">
    <property type="entry name" value="SLC12_C"/>
</dbReference>
<dbReference type="InterPro" id="IPR002445">
    <property type="entry name" value="Slc12a1"/>
</dbReference>
<dbReference type="InterPro" id="IPR002443">
    <property type="entry name" value="SLC12A1/SLC12A2"/>
</dbReference>
<dbReference type="InterPro" id="IPR004842">
    <property type="entry name" value="SLC12A_fam"/>
</dbReference>
<dbReference type="NCBIfam" id="TIGR00930">
    <property type="entry name" value="2a30"/>
    <property type="match status" value="1"/>
</dbReference>
<dbReference type="PANTHER" id="PTHR11827:SF93">
    <property type="entry name" value="SOLUTE CARRIER FAMILY 12 MEMBER 1"/>
    <property type="match status" value="1"/>
</dbReference>
<dbReference type="PANTHER" id="PTHR11827">
    <property type="entry name" value="SOLUTE CARRIER FAMILY 12, CATION COTRANSPORTERS"/>
    <property type="match status" value="1"/>
</dbReference>
<dbReference type="Pfam" id="PF00324">
    <property type="entry name" value="AA_permease"/>
    <property type="match status" value="1"/>
</dbReference>
<dbReference type="Pfam" id="PF08403">
    <property type="entry name" value="AA_permease_N"/>
    <property type="match status" value="1"/>
</dbReference>
<dbReference type="Pfam" id="PF03522">
    <property type="entry name" value="SLC12"/>
    <property type="match status" value="1"/>
</dbReference>
<dbReference type="PRINTS" id="PR01207">
    <property type="entry name" value="NAKCLTRNSPRT"/>
</dbReference>
<dbReference type="PRINTS" id="PR01209">
    <property type="entry name" value="NAKCLTRSPRT2"/>
</dbReference>
<reference key="1">
    <citation type="journal article" date="1995" name="Am. J. Physiol.">
        <title>Cloning, embryonic expression, and alternative splicing of a murine kidney-specific Na-K-Cl cotransporter.</title>
        <authorList>
            <person name="Igarashi P."/>
            <person name="Vanden Heuvel G.B."/>
            <person name="Payne J.A."/>
            <person name="Forbush B. III"/>
        </authorList>
    </citation>
    <scope>NUCLEOTIDE SEQUENCE [MRNA] (ISOFORMS A; B AND F)</scope>
    <scope>TISSUE SPECIFICITY (ISOFORMS A; B AND F)</scope>
    <source>
        <tissue>Kidney</tissue>
    </source>
</reference>
<reference key="2">
    <citation type="journal article" date="1999" name="Am. J. Physiol.">
        <title>Isoforms of the Na-K-2Cl cotransporter in murine TAL I. Molecular characterization and intrarenal localization.</title>
        <authorList>
            <person name="Mount D.B."/>
            <person name="Baekgaard A."/>
            <person name="Hall A.E."/>
            <person name="Plata C."/>
            <person name="Xu J."/>
            <person name="Beier D.R."/>
            <person name="Gamba G."/>
            <person name="Hebert S.C."/>
        </authorList>
    </citation>
    <scope>NUCLEOTIDE SEQUENCE [MRNA] (ISOFORMS A4 AND F)</scope>
    <source>
        <strain>CD-1</strain>
    </source>
</reference>
<reference key="3">
    <citation type="journal article" date="2004" name="Genome Res.">
        <title>The status, quality, and expansion of the NIH full-length cDNA project: the Mammalian Gene Collection (MGC).</title>
        <authorList>
            <consortium name="The MGC Project Team"/>
        </authorList>
    </citation>
    <scope>NUCLEOTIDE SEQUENCE [LARGE SCALE MRNA] (ISOFORM A)</scope>
    <source>
        <tissue>Kidney</tissue>
    </source>
</reference>
<reference key="4">
    <citation type="journal article" date="2002" name="J. Biol. Chem.">
        <title>Functional properties of the apical Na+-K+-2Cl- cotransporter isoforms.</title>
        <authorList>
            <person name="Plata C."/>
            <person name="Meade P."/>
            <person name="Vazquez N."/>
            <person name="Hebert S.C."/>
            <person name="Gamba G."/>
        </authorList>
    </citation>
    <scope>FUNCTION (ISOFORMS A; B AND F)</scope>
    <scope>TRANSPORT ACTIVITY (ISOFORMS A; B AND F)</scope>
    <scope>ACTIVITY REGULATION (ISOFORMS A; B AND F)</scope>
    <scope>BIOPHYSICOCHEMICAL PROPERTIES (ISOFORMS A; B AND F)</scope>
</reference>
<reference key="5">
    <citation type="journal article" date="2010" name="Cell">
        <title>A tissue-specific atlas of mouse protein phosphorylation and expression.</title>
        <authorList>
            <person name="Huttlin E.L."/>
            <person name="Jedrychowski M.P."/>
            <person name="Elias J.E."/>
            <person name="Goswami T."/>
            <person name="Rad R."/>
            <person name="Beausoleil S.A."/>
            <person name="Villen J."/>
            <person name="Haas W."/>
            <person name="Sowa M.E."/>
            <person name="Gygi S.P."/>
        </authorList>
    </citation>
    <scope>PHOSPHORYLATION [LARGE SCALE ANALYSIS] AT SER-57; THR-96 AND THR-101</scope>
    <scope>IDENTIFICATION BY MASS SPECTROMETRY [LARGE SCALE ANALYSIS]</scope>
    <source>
        <tissue>Kidney</tissue>
    </source>
</reference>
<reference key="6">
    <citation type="journal article" date="2010" name="Mol. Cell. Biol.">
        <title>SORLA/SORL1 functionally interacts with SPAK to control renal activation of Na(+)-K(+)-Cl(-) cotransporter 2.</title>
        <authorList>
            <person name="Reiche J."/>
            <person name="Theilig F."/>
            <person name="Rafiqi F.H."/>
            <person name="Carlo A.S."/>
            <person name="Militz D."/>
            <person name="Mutig K."/>
            <person name="Todiras M."/>
            <person name="Christensen E.I."/>
            <person name="Ellison D.H."/>
            <person name="Bader M."/>
            <person name="Nykjaer A."/>
            <person name="Bachmann S."/>
            <person name="Alessi D."/>
            <person name="Willnow T.E."/>
        </authorList>
    </citation>
    <scope>TISSUE SPECIFICITY</scope>
</reference>
<reference key="7">
    <citation type="journal article" date="2011" name="J. Cell Sci.">
        <title>Regulation of the NKCC2 ion cotransporter by SPAK-OSR1-dependent and -independent pathways.</title>
        <authorList>
            <person name="Richardson C."/>
            <person name="Sakamoto K."/>
            <person name="de los Heros P."/>
            <person name="Deak M."/>
            <person name="Campbell D.G."/>
            <person name="Prescott A.R."/>
            <person name="Alessi D.R."/>
        </authorList>
    </citation>
    <scope>ACTIVITY REGULATION</scope>
    <scope>PHOSPHORYLATION AT SER-87; THR-96 AND THR-101</scope>
</reference>
<reference key="8">
    <citation type="journal article" date="2011" name="Proc. Natl. Acad. Sci. U.S.A.">
        <title>Impaired phosphorylation of Na(+)-K(+)-2Cl(-) cotransporter by oxidative stress-responsive kinase-1 deficiency manifests hypotension and Bartter-like syndrome.</title>
        <authorList>
            <person name="Lin S.H."/>
            <person name="Yu I.S."/>
            <person name="Jiang S.T."/>
            <person name="Lin S.W."/>
            <person name="Chu P."/>
            <person name="Chen A."/>
            <person name="Sytwu H.K."/>
            <person name="Sohara E."/>
            <person name="Uchida S."/>
            <person name="Sasaki S."/>
            <person name="Yang S.S."/>
        </authorList>
    </citation>
    <scope>ACTIVITY REGULATION</scope>
</reference>
<reference key="9">
    <citation type="journal article" date="2016" name="J. Am. Soc. Nephrol.">
        <title>Calcineurin and sorting-related receptor with A-type repeats interact to regulate the renal Na(+)-K(+)-2Cl(-) cotransporter.</title>
        <authorList>
            <person name="Borschewski A."/>
            <person name="Himmerkus N."/>
            <person name="Boldt C."/>
            <person name="Blankenstein K.I."/>
            <person name="McCormick J.A."/>
            <person name="Lazelle R."/>
            <person name="Willnow T.E."/>
            <person name="Jankowski V."/>
            <person name="Plain A."/>
            <person name="Bleich M."/>
            <person name="Ellison D.H."/>
            <person name="Bachmann S."/>
            <person name="Mutig K."/>
        </authorList>
    </citation>
    <scope>FUNCTION</scope>
    <scope>PHOSPHORYLATION AT THR-96 AND THR-101</scope>
</reference>
<reference key="10">
    <citation type="journal article" date="2018" name="Am. J. Physiol.">
        <title>H+-ATPase B1 subunit localizes to thick ascending limb and distal convoluted tubule of rodent and human kidney.</title>
        <authorList>
            <person name="Frische S."/>
            <person name="Chambrey R."/>
            <person name="Trepiccione F."/>
            <person name="Zamani R."/>
            <person name="Marcussen N."/>
            <person name="Alexander R.T."/>
            <person name="Skjoedt K."/>
            <person name="Svenningsen P."/>
            <person name="Dimke H."/>
        </authorList>
    </citation>
    <scope>SUBCELLULAR LOCATION</scope>
    <scope>TISSUE SPECIFICITY</scope>
</reference>
<comment type="function">
    <text evidence="5 18">Renal sodium, potassium and chloride ion cotransporter that mediates the transepithelial NaCl reabsorption in the thick ascending limb and plays an essential role in the urinary concentration and volume regulation. Electrically silent transporter system.</text>
</comment>
<comment type="function">
    <molecule>Isoform A</molecule>
    <text evidence="5">High affinity, high capacity cotransporter for sodium, potassium and chloride ions, with a coupling ratio 1Na(+):1K(+):2Cl(-).</text>
</comment>
<comment type="function">
    <molecule>Isoform B</molecule>
    <text evidence="5">High affinity, low capacity cotransporter for sodium, potassium and chloride ions, with a coupling ratio 1Na(+):1K(+):2Cl(-).</text>
</comment>
<comment type="function">
    <molecule>Isoform F</molecule>
    <text evidence="5">Low affinity, low capacity cotransporter for sodium, potassium and chloride ions, with a coupling ratio 1Na(+):1K(+):2Cl(-).</text>
</comment>
<comment type="catalytic activity">
    <molecule>Isoform A</molecule>
    <reaction evidence="5">
        <text>K(+)(out) + 2 chloride(out) + Na(+)(out) = K(+)(in) + 2 chloride(in) + Na(+)(in)</text>
        <dbReference type="Rhea" id="RHEA:72395"/>
        <dbReference type="ChEBI" id="CHEBI:17996"/>
        <dbReference type="ChEBI" id="CHEBI:29101"/>
        <dbReference type="ChEBI" id="CHEBI:29103"/>
    </reaction>
    <physiologicalReaction direction="left-to-right" evidence="17">
        <dbReference type="Rhea" id="RHEA:72396"/>
    </physiologicalReaction>
</comment>
<comment type="catalytic activity">
    <molecule>Isoform B</molecule>
    <reaction evidence="5">
        <text>K(+)(out) + 2 chloride(out) + Na(+)(out) = K(+)(in) + 2 chloride(in) + Na(+)(in)</text>
        <dbReference type="Rhea" id="RHEA:72395"/>
        <dbReference type="ChEBI" id="CHEBI:17996"/>
        <dbReference type="ChEBI" id="CHEBI:29101"/>
        <dbReference type="ChEBI" id="CHEBI:29103"/>
    </reaction>
    <physiologicalReaction direction="left-to-right" evidence="17">
        <dbReference type="Rhea" id="RHEA:72396"/>
    </physiologicalReaction>
</comment>
<comment type="catalytic activity">
    <molecule>Isoform F</molecule>
    <reaction evidence="5">
        <text>K(+)(out) + 2 chloride(out) + Na(+)(out) = K(+)(in) + 2 chloride(in) + Na(+)(in)</text>
        <dbReference type="Rhea" id="RHEA:72395"/>
        <dbReference type="ChEBI" id="CHEBI:17996"/>
        <dbReference type="ChEBI" id="CHEBI:29101"/>
        <dbReference type="ChEBI" id="CHEBI:29103"/>
    </reaction>
    <physiologicalReaction direction="left-to-right" evidence="17">
        <dbReference type="Rhea" id="RHEA:72396"/>
    </physiologicalReaction>
</comment>
<comment type="activity regulation">
    <text evidence="7 8">Activated following phosphorylation by OXSR1/OSR1 and STK39/SPAK downstream of WNK kinases (WNK1, WNK2, WNK3 or WNK4).</text>
</comment>
<comment type="activity regulation">
    <molecule>Isoform A</molecule>
    <text evidence="5">Inhibited by mercury dichloride and diuretic drug bumetaide. Inactive in isotonic conditions.</text>
</comment>
<comment type="activity regulation">
    <molecule>Isoform B</molecule>
    <text evidence="5">Inhibited by mercury dichloride and diuretic drug bumetaide. Inactive in isotonic conditions.</text>
</comment>
<comment type="activity regulation">
    <molecule>Isoform F</molecule>
    <text evidence="5">Inhibited by mercury dichloride and diuretic drug bumetaide. Inactive in isotonic conditions.</text>
</comment>
<comment type="biophysicochemical properties">
    <molecule>Isoform A</molecule>
    <phDependence>
        <text evidence="5">Stable transporter activity from pH 6 to pH 8.</text>
    </phDependence>
</comment>
<comment type="biophysicochemical properties">
    <molecule>Isoform B</molecule>
    <phDependence>
        <text evidence="5">Stable transporter activity from pH 6 to pH 8.</text>
    </phDependence>
</comment>
<comment type="biophysicochemical properties">
    <molecule>Isoform F</molecule>
    <phDependence>
        <text evidence="5">Stable transporter activity from pH 6 to pH 8.</text>
    </phDependence>
</comment>
<comment type="subunit">
    <text evidence="1">When phosphorylated, interacts with PPP3CB.</text>
</comment>
<comment type="subcellular location">
    <subcellularLocation>
        <location evidence="10">Apical cell membrane</location>
        <topology evidence="3">Multi-pass membrane protein</topology>
    </subcellularLocation>
</comment>
<comment type="alternative products">
    <event type="alternative splicing"/>
    <isoform>
        <id>P55014-1</id>
        <name>A</name>
        <name evidence="13">BSC1-A</name>
        <sequence type="displayed"/>
    </isoform>
    <isoform>
        <id>P55014-2</id>
        <name>A4</name>
        <sequence type="described" ref="VSP_006101 VSP_006102"/>
    </isoform>
    <isoform>
        <id>P55014-3</id>
        <name>B</name>
        <name evidence="13">BSC1-B</name>
        <sequence type="described" ref="VSP_006099"/>
    </isoform>
    <isoform>
        <id>P55014-4</id>
        <name>F</name>
        <name>C9</name>
        <name evidence="13">BSC1-F</name>
        <sequence type="described" ref="VSP_006100"/>
    </isoform>
</comment>
<comment type="tissue specificity">
    <text evidence="6 10">Predominantly expressed in kidney (at protein level).</text>
</comment>
<comment type="tissue specificity">
    <molecule>Isoform A</molecule>
    <text evidence="11">Kidney-specific; most highly expressed in the outer stripe of outer medulla (at protein level).</text>
</comment>
<comment type="tissue specificity">
    <molecule>Isoform B</molecule>
    <text evidence="11">Kidney-specific; most highly expressed in the cortical thick ascending limb (at protein level).</text>
</comment>
<comment type="tissue specificity">
    <molecule>Isoform F</molecule>
    <text evidence="11">Kidney-specific; most highly expressed in the inner stripe of outer medulla (at protein level).</text>
</comment>
<comment type="domain">
    <text evidence="2">The RFXV motif mediates binding with OXSR1/OSR1 and STK39/SPAK.</text>
</comment>
<comment type="PTM">
    <text evidence="7 9">Phosphorylated at Ser-87, Thr-96 and Thr-101 by OXSR1/OSR1 and STK39/SPAK downstream of WNK kinases (WNK1, WNK2, WNK3 or WNK4), promoting its activity (PubMed:21321328). Short-term cyclosporine administration increases SLC12A1 phosphorylation in kidney thick ascending limb, possibly through the inhibition of PPP3CB/calcineurin A beta phosphatase (PubMed:25967121).</text>
</comment>
<comment type="similarity">
    <text evidence="16">Belongs to the SLC12A transporter family.</text>
</comment>